<proteinExistence type="inferred from homology"/>
<keyword id="KW-1003">Cell membrane</keyword>
<keyword id="KW-0472">Membrane</keyword>
<keyword id="KW-0812">Transmembrane</keyword>
<keyword id="KW-1133">Transmembrane helix</keyword>
<organism>
    <name type="scientific">Escherichia coli O8 (strain IAI1)</name>
    <dbReference type="NCBI Taxonomy" id="585034"/>
    <lineage>
        <taxon>Bacteria</taxon>
        <taxon>Pseudomonadati</taxon>
        <taxon>Pseudomonadota</taxon>
        <taxon>Gammaproteobacteria</taxon>
        <taxon>Enterobacterales</taxon>
        <taxon>Enterobacteriaceae</taxon>
        <taxon>Escherichia</taxon>
    </lineage>
</organism>
<dbReference type="EMBL" id="CU928160">
    <property type="protein sequence ID" value="CAQ99966.1"/>
    <property type="molecule type" value="Genomic_DNA"/>
</dbReference>
<dbReference type="RefSeq" id="WP_000439331.1">
    <property type="nucleotide sequence ID" value="NC_011741.1"/>
</dbReference>
<dbReference type="KEGG" id="ecr:ECIAI1_3151"/>
<dbReference type="HOGENOM" id="CLU_097887_1_1_6"/>
<dbReference type="GO" id="GO:0005886">
    <property type="term" value="C:plasma membrane"/>
    <property type="evidence" value="ECO:0007669"/>
    <property type="project" value="UniProtKB-SubCell"/>
</dbReference>
<dbReference type="HAMAP" id="MF_00143">
    <property type="entry name" value="UPF0114"/>
    <property type="match status" value="1"/>
</dbReference>
<dbReference type="InterPro" id="IPR005134">
    <property type="entry name" value="UPF0114"/>
</dbReference>
<dbReference type="InterPro" id="IPR020761">
    <property type="entry name" value="UPF0114_bac"/>
</dbReference>
<dbReference type="NCBIfam" id="TIGR00645">
    <property type="entry name" value="HI0507"/>
    <property type="match status" value="1"/>
</dbReference>
<dbReference type="PANTHER" id="PTHR38596">
    <property type="entry name" value="UPF0114 PROTEIN YQHA"/>
    <property type="match status" value="1"/>
</dbReference>
<dbReference type="PANTHER" id="PTHR38596:SF1">
    <property type="entry name" value="UPF0114 PROTEIN YQHA"/>
    <property type="match status" value="1"/>
</dbReference>
<dbReference type="Pfam" id="PF03350">
    <property type="entry name" value="UPF0114"/>
    <property type="match status" value="1"/>
</dbReference>
<gene>
    <name evidence="1" type="primary">yqhA</name>
    <name type="ordered locus">ECIAI1_3151</name>
</gene>
<reference key="1">
    <citation type="journal article" date="2009" name="PLoS Genet.">
        <title>Organised genome dynamics in the Escherichia coli species results in highly diverse adaptive paths.</title>
        <authorList>
            <person name="Touchon M."/>
            <person name="Hoede C."/>
            <person name="Tenaillon O."/>
            <person name="Barbe V."/>
            <person name="Baeriswyl S."/>
            <person name="Bidet P."/>
            <person name="Bingen E."/>
            <person name="Bonacorsi S."/>
            <person name="Bouchier C."/>
            <person name="Bouvet O."/>
            <person name="Calteau A."/>
            <person name="Chiapello H."/>
            <person name="Clermont O."/>
            <person name="Cruveiller S."/>
            <person name="Danchin A."/>
            <person name="Diard M."/>
            <person name="Dossat C."/>
            <person name="Karoui M.E."/>
            <person name="Frapy E."/>
            <person name="Garry L."/>
            <person name="Ghigo J.M."/>
            <person name="Gilles A.M."/>
            <person name="Johnson J."/>
            <person name="Le Bouguenec C."/>
            <person name="Lescat M."/>
            <person name="Mangenot S."/>
            <person name="Martinez-Jehanne V."/>
            <person name="Matic I."/>
            <person name="Nassif X."/>
            <person name="Oztas S."/>
            <person name="Petit M.A."/>
            <person name="Pichon C."/>
            <person name="Rouy Z."/>
            <person name="Ruf C.S."/>
            <person name="Schneider D."/>
            <person name="Tourret J."/>
            <person name="Vacherie B."/>
            <person name="Vallenet D."/>
            <person name="Medigue C."/>
            <person name="Rocha E.P.C."/>
            <person name="Denamur E."/>
        </authorList>
    </citation>
    <scope>NUCLEOTIDE SEQUENCE [LARGE SCALE GENOMIC DNA]</scope>
    <source>
        <strain>IAI1</strain>
    </source>
</reference>
<evidence type="ECO:0000255" key="1">
    <source>
        <dbReference type="HAMAP-Rule" id="MF_00143"/>
    </source>
</evidence>
<accession>B7LZF6</accession>
<comment type="subcellular location">
    <subcellularLocation>
        <location evidence="1">Cell membrane</location>
        <topology evidence="1">Multi-pass membrane protein</topology>
    </subcellularLocation>
</comment>
<comment type="similarity">
    <text evidence="1">Belongs to the UPF0114 family.</text>
</comment>
<sequence length="164" mass="18641">MERFLENAMYASRWLLAPVYFGLSLALVALALKFFQEIIHVLPNIFSMAESDLILVLLSLVDMTLVGGLLVMVMFSGYENFVSQLDISENKEKLNWLGKMDATSLKNKVAASIVAISSIHLLRVFMDAKNVPDNKLMWYVIIHLTFVLSAFVMGYLDRLTRHNH</sequence>
<feature type="chain" id="PRO_1000197573" description="UPF0114 protein YqhA">
    <location>
        <begin position="1"/>
        <end position="164"/>
    </location>
</feature>
<feature type="transmembrane region" description="Helical" evidence="1">
    <location>
        <begin position="15"/>
        <end position="35"/>
    </location>
</feature>
<feature type="transmembrane region" description="Helical" evidence="1">
    <location>
        <begin position="53"/>
        <end position="73"/>
    </location>
</feature>
<feature type="transmembrane region" description="Helical" evidence="1">
    <location>
        <begin position="136"/>
        <end position="156"/>
    </location>
</feature>
<name>YQHA_ECO8A</name>
<protein>
    <recommendedName>
        <fullName evidence="1">UPF0114 protein YqhA</fullName>
    </recommendedName>
</protein>